<dbReference type="EC" id="1.97.1.12" evidence="2"/>
<dbReference type="EMBL" id="EF115542">
    <property type="protein sequence ID" value="ABK79547.1"/>
    <property type="molecule type" value="Genomic_DNA"/>
</dbReference>
<dbReference type="RefSeq" id="YP_899458.1">
    <property type="nucleotide sequence ID" value="NC_008602.1"/>
</dbReference>
<dbReference type="SMR" id="A1E9X5"/>
<dbReference type="FunCoup" id="A1E9X5">
    <property type="interactions" value="310"/>
</dbReference>
<dbReference type="STRING" id="4558.A1E9X5"/>
<dbReference type="GeneID" id="4549153"/>
<dbReference type="KEGG" id="sbi:4549153"/>
<dbReference type="InParanoid" id="A1E9X5"/>
<dbReference type="OrthoDB" id="1865383at2759"/>
<dbReference type="Proteomes" id="UP000000768">
    <property type="component" value="Chloroplast"/>
</dbReference>
<dbReference type="GO" id="GO:0009535">
    <property type="term" value="C:chloroplast thylakoid membrane"/>
    <property type="evidence" value="ECO:0007669"/>
    <property type="project" value="UniProtKB-SubCell"/>
</dbReference>
<dbReference type="GO" id="GO:0009522">
    <property type="term" value="C:photosystem I"/>
    <property type="evidence" value="ECO:0007669"/>
    <property type="project" value="UniProtKB-KW"/>
</dbReference>
<dbReference type="GO" id="GO:0051539">
    <property type="term" value="F:4 iron, 4 sulfur cluster binding"/>
    <property type="evidence" value="ECO:0007669"/>
    <property type="project" value="UniProtKB-KW"/>
</dbReference>
<dbReference type="GO" id="GO:0009055">
    <property type="term" value="F:electron transfer activity"/>
    <property type="evidence" value="ECO:0007669"/>
    <property type="project" value="UniProtKB-UniRule"/>
</dbReference>
<dbReference type="GO" id="GO:0046872">
    <property type="term" value="F:metal ion binding"/>
    <property type="evidence" value="ECO:0007669"/>
    <property type="project" value="UniProtKB-KW"/>
</dbReference>
<dbReference type="GO" id="GO:0016491">
    <property type="term" value="F:oxidoreductase activity"/>
    <property type="evidence" value="ECO:0007669"/>
    <property type="project" value="UniProtKB-KW"/>
</dbReference>
<dbReference type="GO" id="GO:0015979">
    <property type="term" value="P:photosynthesis"/>
    <property type="evidence" value="ECO:0000318"/>
    <property type="project" value="GO_Central"/>
</dbReference>
<dbReference type="GO" id="GO:0009773">
    <property type="term" value="P:photosynthetic electron transport in photosystem I"/>
    <property type="evidence" value="ECO:0007669"/>
    <property type="project" value="InterPro"/>
</dbReference>
<dbReference type="FunFam" id="3.30.70.20:FF:000001">
    <property type="entry name" value="Photosystem I iron-sulfur center"/>
    <property type="match status" value="1"/>
</dbReference>
<dbReference type="Gene3D" id="3.30.70.20">
    <property type="match status" value="1"/>
</dbReference>
<dbReference type="HAMAP" id="MF_01303">
    <property type="entry name" value="PSI_PsaC"/>
    <property type="match status" value="1"/>
</dbReference>
<dbReference type="InterPro" id="IPR017896">
    <property type="entry name" value="4Fe4S_Fe-S-bd"/>
</dbReference>
<dbReference type="InterPro" id="IPR017900">
    <property type="entry name" value="4Fe4S_Fe_S_CS"/>
</dbReference>
<dbReference type="InterPro" id="IPR050157">
    <property type="entry name" value="PSI_iron-sulfur_center"/>
</dbReference>
<dbReference type="InterPro" id="IPR017491">
    <property type="entry name" value="PSI_PsaC"/>
</dbReference>
<dbReference type="NCBIfam" id="TIGR03048">
    <property type="entry name" value="PS_I_psaC"/>
    <property type="match status" value="1"/>
</dbReference>
<dbReference type="PANTHER" id="PTHR24960:SF79">
    <property type="entry name" value="PHOTOSYSTEM I IRON-SULFUR CENTER"/>
    <property type="match status" value="1"/>
</dbReference>
<dbReference type="PANTHER" id="PTHR24960">
    <property type="entry name" value="PHOTOSYSTEM I IRON-SULFUR CENTER-RELATED"/>
    <property type="match status" value="1"/>
</dbReference>
<dbReference type="Pfam" id="PF12838">
    <property type="entry name" value="Fer4_7"/>
    <property type="match status" value="1"/>
</dbReference>
<dbReference type="SUPFAM" id="SSF54862">
    <property type="entry name" value="4Fe-4S ferredoxins"/>
    <property type="match status" value="1"/>
</dbReference>
<dbReference type="PROSITE" id="PS00198">
    <property type="entry name" value="4FE4S_FER_1"/>
    <property type="match status" value="2"/>
</dbReference>
<dbReference type="PROSITE" id="PS51379">
    <property type="entry name" value="4FE4S_FER_2"/>
    <property type="match status" value="2"/>
</dbReference>
<geneLocation type="chloroplast"/>
<keyword id="KW-0004">4Fe-4S</keyword>
<keyword id="KW-0150">Chloroplast</keyword>
<keyword id="KW-0249">Electron transport</keyword>
<keyword id="KW-0408">Iron</keyword>
<keyword id="KW-0411">Iron-sulfur</keyword>
<keyword id="KW-0472">Membrane</keyword>
<keyword id="KW-0479">Metal-binding</keyword>
<keyword id="KW-0560">Oxidoreductase</keyword>
<keyword id="KW-0602">Photosynthesis</keyword>
<keyword id="KW-0603">Photosystem I</keyword>
<keyword id="KW-0934">Plastid</keyword>
<keyword id="KW-1185">Reference proteome</keyword>
<keyword id="KW-0677">Repeat</keyword>
<keyword id="KW-0793">Thylakoid</keyword>
<keyword id="KW-0813">Transport</keyword>
<protein>
    <recommendedName>
        <fullName evidence="2">Photosystem I iron-sulfur center</fullName>
        <ecNumber evidence="2">1.97.1.12</ecNumber>
    </recommendedName>
    <alternativeName>
        <fullName evidence="2">9 kDa polypeptide</fullName>
    </alternativeName>
    <alternativeName>
        <fullName evidence="2">PSI-C</fullName>
    </alternativeName>
    <alternativeName>
        <fullName evidence="2">Photosystem I subunit VII</fullName>
    </alternativeName>
    <alternativeName>
        <fullName evidence="2">PsaC</fullName>
    </alternativeName>
</protein>
<name>PSAC_SORBI</name>
<reference key="1">
    <citation type="journal article" date="2007" name="Theor. Appl. Genet.">
        <title>Complete chloroplast genome sequences of Hordeum vulgare, Sorghum bicolor and Agrostis stolonifera, and comparative analyses with other grass genomes.</title>
        <authorList>
            <person name="Saski C."/>
            <person name="Lee S.-B."/>
            <person name="Fjellheim S."/>
            <person name="Guda C."/>
            <person name="Jansen R.K."/>
            <person name="Luo H."/>
            <person name="Tomkins J."/>
            <person name="Rognli O.A."/>
            <person name="Daniell H."/>
            <person name="Clarke J.L."/>
        </authorList>
    </citation>
    <scope>NUCLEOTIDE SEQUENCE [LARGE SCALE GENOMIC DNA]</scope>
    <source>
        <strain>cv. BTx623</strain>
    </source>
</reference>
<comment type="function">
    <text evidence="2">Apoprotein for the two 4Fe-4S centers FA and FB of photosystem I (PSI); essential for photochemical activity. FB is the terminal electron acceptor of PSI, donating electrons to ferredoxin. The C-terminus interacts with PsaA/B/D and helps assemble the protein into the PSI complex. Required for binding of PsaD and PsaE to PSI. PSI is a plastocyanin-ferredoxin oxidoreductase, converting photonic excitation into a charge separation, which transfers an electron from the donor P700 chlorophyll pair to the spectroscopically characterized acceptors A0, A1, FX, FA and FB in turn.</text>
</comment>
<comment type="catalytic activity">
    <reaction evidence="2">
        <text>reduced [plastocyanin] + hnu + oxidized [2Fe-2S]-[ferredoxin] = oxidized [plastocyanin] + reduced [2Fe-2S]-[ferredoxin]</text>
        <dbReference type="Rhea" id="RHEA:30407"/>
        <dbReference type="Rhea" id="RHEA-COMP:10000"/>
        <dbReference type="Rhea" id="RHEA-COMP:10001"/>
        <dbReference type="Rhea" id="RHEA-COMP:10039"/>
        <dbReference type="Rhea" id="RHEA-COMP:10040"/>
        <dbReference type="ChEBI" id="CHEBI:29036"/>
        <dbReference type="ChEBI" id="CHEBI:30212"/>
        <dbReference type="ChEBI" id="CHEBI:33737"/>
        <dbReference type="ChEBI" id="CHEBI:33738"/>
        <dbReference type="ChEBI" id="CHEBI:49552"/>
        <dbReference type="EC" id="1.97.1.12"/>
    </reaction>
</comment>
<comment type="cofactor">
    <cofactor evidence="2">
        <name>[4Fe-4S] cluster</name>
        <dbReference type="ChEBI" id="CHEBI:49883"/>
    </cofactor>
    <text evidence="2">Binds 2 [4Fe-4S] clusters. Cluster 2 is most probably the spectroscopically characterized electron acceptor FA and cluster 1 is most probably FB.</text>
</comment>
<comment type="subunit">
    <text evidence="2">The eukaryotic PSI reaction center is composed of at least 11 subunits.</text>
</comment>
<comment type="subcellular location">
    <subcellularLocation>
        <location evidence="2">Plastid</location>
        <location evidence="2">Chloroplast thylakoid membrane</location>
        <topology evidence="2">Peripheral membrane protein</topology>
        <orientation evidence="2">Stromal side</orientation>
    </subcellularLocation>
</comment>
<gene>
    <name evidence="2" type="primary">psaC</name>
</gene>
<proteinExistence type="inferred from homology"/>
<feature type="initiator methionine" description="Removed" evidence="1">
    <location>
        <position position="1"/>
    </location>
</feature>
<feature type="chain" id="PRO_0000276002" description="Photosystem I iron-sulfur center">
    <location>
        <begin position="2"/>
        <end position="81"/>
    </location>
</feature>
<feature type="domain" description="4Fe-4S ferredoxin-type 1" evidence="2">
    <location>
        <begin position="2"/>
        <end position="31"/>
    </location>
</feature>
<feature type="domain" description="4Fe-4S ferredoxin-type 2" evidence="2">
    <location>
        <begin position="39"/>
        <end position="68"/>
    </location>
</feature>
<feature type="binding site" evidence="2">
    <location>
        <position position="11"/>
    </location>
    <ligand>
        <name>[4Fe-4S] cluster</name>
        <dbReference type="ChEBI" id="CHEBI:49883"/>
        <label>1</label>
    </ligand>
</feature>
<feature type="binding site" evidence="2">
    <location>
        <position position="14"/>
    </location>
    <ligand>
        <name>[4Fe-4S] cluster</name>
        <dbReference type="ChEBI" id="CHEBI:49883"/>
        <label>1</label>
    </ligand>
</feature>
<feature type="binding site" evidence="2">
    <location>
        <position position="17"/>
    </location>
    <ligand>
        <name>[4Fe-4S] cluster</name>
        <dbReference type="ChEBI" id="CHEBI:49883"/>
        <label>1</label>
    </ligand>
</feature>
<feature type="binding site" evidence="2">
    <location>
        <position position="21"/>
    </location>
    <ligand>
        <name>[4Fe-4S] cluster</name>
        <dbReference type="ChEBI" id="CHEBI:49883"/>
        <label>2</label>
    </ligand>
</feature>
<feature type="binding site" evidence="2">
    <location>
        <position position="48"/>
    </location>
    <ligand>
        <name>[4Fe-4S] cluster</name>
        <dbReference type="ChEBI" id="CHEBI:49883"/>
        <label>2</label>
    </ligand>
</feature>
<feature type="binding site" evidence="2">
    <location>
        <position position="51"/>
    </location>
    <ligand>
        <name>[4Fe-4S] cluster</name>
        <dbReference type="ChEBI" id="CHEBI:49883"/>
        <label>2</label>
    </ligand>
</feature>
<feature type="binding site" evidence="2">
    <location>
        <position position="54"/>
    </location>
    <ligand>
        <name>[4Fe-4S] cluster</name>
        <dbReference type="ChEBI" id="CHEBI:49883"/>
        <label>2</label>
    </ligand>
</feature>
<feature type="binding site" evidence="2">
    <location>
        <position position="58"/>
    </location>
    <ligand>
        <name>[4Fe-4S] cluster</name>
        <dbReference type="ChEBI" id="CHEBI:49883"/>
        <label>1</label>
    </ligand>
</feature>
<organism>
    <name type="scientific">Sorghum bicolor</name>
    <name type="common">Sorghum</name>
    <name type="synonym">Sorghum vulgare</name>
    <dbReference type="NCBI Taxonomy" id="4558"/>
    <lineage>
        <taxon>Eukaryota</taxon>
        <taxon>Viridiplantae</taxon>
        <taxon>Streptophyta</taxon>
        <taxon>Embryophyta</taxon>
        <taxon>Tracheophyta</taxon>
        <taxon>Spermatophyta</taxon>
        <taxon>Magnoliopsida</taxon>
        <taxon>Liliopsida</taxon>
        <taxon>Poales</taxon>
        <taxon>Poaceae</taxon>
        <taxon>PACMAD clade</taxon>
        <taxon>Panicoideae</taxon>
        <taxon>Andropogonodae</taxon>
        <taxon>Andropogoneae</taxon>
        <taxon>Sorghinae</taxon>
        <taxon>Sorghum</taxon>
    </lineage>
</organism>
<sequence length="81" mass="8988">MSHSVKIYDTCIGCTQCVRACPTDVLEMIPWDGCKAKQIASAPRTEDCVGCKRCESACPTDFLSVRVYLRSETTRSMALSY</sequence>
<accession>A1E9X5</accession>
<evidence type="ECO:0000250" key="1"/>
<evidence type="ECO:0000255" key="2">
    <source>
        <dbReference type="HAMAP-Rule" id="MF_01303"/>
    </source>
</evidence>